<proteinExistence type="inferred from homology"/>
<keyword id="KW-0963">Cytoplasm</keyword>
<keyword id="KW-0489">Methyltransferase</keyword>
<keyword id="KW-1185">Reference proteome</keyword>
<keyword id="KW-0949">S-adenosyl-L-methionine</keyword>
<keyword id="KW-0808">Transferase</keyword>
<keyword id="KW-0819">tRNA processing</keyword>
<evidence type="ECO:0000255" key="1">
    <source>
        <dbReference type="HAMAP-Rule" id="MF_00605"/>
    </source>
</evidence>
<comment type="function">
    <text evidence="1">Specifically methylates guanosine-37 in various tRNAs.</text>
</comment>
<comment type="catalytic activity">
    <reaction evidence="1">
        <text>guanosine(37) in tRNA + S-adenosyl-L-methionine = N(1)-methylguanosine(37) in tRNA + S-adenosyl-L-homocysteine + H(+)</text>
        <dbReference type="Rhea" id="RHEA:36899"/>
        <dbReference type="Rhea" id="RHEA-COMP:10145"/>
        <dbReference type="Rhea" id="RHEA-COMP:10147"/>
        <dbReference type="ChEBI" id="CHEBI:15378"/>
        <dbReference type="ChEBI" id="CHEBI:57856"/>
        <dbReference type="ChEBI" id="CHEBI:59789"/>
        <dbReference type="ChEBI" id="CHEBI:73542"/>
        <dbReference type="ChEBI" id="CHEBI:74269"/>
        <dbReference type="EC" id="2.1.1.228"/>
    </reaction>
</comment>
<comment type="subunit">
    <text evidence="1">Homodimer.</text>
</comment>
<comment type="subcellular location">
    <subcellularLocation>
        <location evidence="1">Cytoplasm</location>
    </subcellularLocation>
</comment>
<comment type="similarity">
    <text evidence="1">Belongs to the RNA methyltransferase TrmD family.</text>
</comment>
<sequence>MQFDVVTLFPDMFRALTDWGITSRAAKQERYSLRTWNPRDFTTDNYRTIDDRPYGGGPGMVMLARPLEDAIGAAKAAQAEQGIGAPRVVMMSPQGVTLNHDRVMRFAAEPGLILLCGRYEAIDQRLLDRVVDEEVSLGDFVLSGGELPAMALMDAVVRQLPGVLNDSQSAVQDSFVDVLLDCPHYTRPEEYNGVRVPDVLLGGHHAEIETWRRREALRNTLNKRPDLIVKARKNKMLSRADEAWLASLAKEESKA</sequence>
<dbReference type="EC" id="2.1.1.228" evidence="1"/>
<dbReference type="EMBL" id="CP000270">
    <property type="protein sequence ID" value="ABE31939.1"/>
    <property type="molecule type" value="Genomic_DNA"/>
</dbReference>
<dbReference type="RefSeq" id="WP_011489457.1">
    <property type="nucleotide sequence ID" value="NC_007951.1"/>
</dbReference>
<dbReference type="SMR" id="Q13VF0"/>
<dbReference type="STRING" id="266265.Bxe_A1008"/>
<dbReference type="KEGG" id="bxb:DR64_3170"/>
<dbReference type="KEGG" id="bxe:Bxe_A1008"/>
<dbReference type="PATRIC" id="fig|266265.5.peg.3572"/>
<dbReference type="eggNOG" id="COG0336">
    <property type="taxonomic scope" value="Bacteria"/>
</dbReference>
<dbReference type="OrthoDB" id="9807416at2"/>
<dbReference type="Proteomes" id="UP000001817">
    <property type="component" value="Chromosome 1"/>
</dbReference>
<dbReference type="GO" id="GO:0005829">
    <property type="term" value="C:cytosol"/>
    <property type="evidence" value="ECO:0007669"/>
    <property type="project" value="TreeGrafter"/>
</dbReference>
<dbReference type="GO" id="GO:0052906">
    <property type="term" value="F:tRNA (guanine(37)-N1)-methyltransferase activity"/>
    <property type="evidence" value="ECO:0007669"/>
    <property type="project" value="UniProtKB-UniRule"/>
</dbReference>
<dbReference type="GO" id="GO:0002939">
    <property type="term" value="P:tRNA N1-guanine methylation"/>
    <property type="evidence" value="ECO:0007669"/>
    <property type="project" value="TreeGrafter"/>
</dbReference>
<dbReference type="CDD" id="cd18080">
    <property type="entry name" value="TrmD-like"/>
    <property type="match status" value="1"/>
</dbReference>
<dbReference type="FunFam" id="1.10.1270.20:FF:000001">
    <property type="entry name" value="tRNA (guanine-N(1)-)-methyltransferase"/>
    <property type="match status" value="1"/>
</dbReference>
<dbReference type="FunFam" id="3.40.1280.10:FF:000001">
    <property type="entry name" value="tRNA (guanine-N(1)-)-methyltransferase"/>
    <property type="match status" value="1"/>
</dbReference>
<dbReference type="Gene3D" id="3.40.1280.10">
    <property type="match status" value="1"/>
</dbReference>
<dbReference type="Gene3D" id="1.10.1270.20">
    <property type="entry name" value="tRNA(m1g37)methyltransferase, domain 2"/>
    <property type="match status" value="1"/>
</dbReference>
<dbReference type="HAMAP" id="MF_00605">
    <property type="entry name" value="TrmD"/>
    <property type="match status" value="1"/>
</dbReference>
<dbReference type="InterPro" id="IPR029028">
    <property type="entry name" value="Alpha/beta_knot_MTases"/>
</dbReference>
<dbReference type="InterPro" id="IPR023148">
    <property type="entry name" value="tRNA_m1G_MeTrfase_C_sf"/>
</dbReference>
<dbReference type="InterPro" id="IPR002649">
    <property type="entry name" value="tRNA_m1G_MeTrfase_TrmD"/>
</dbReference>
<dbReference type="InterPro" id="IPR029026">
    <property type="entry name" value="tRNA_m1G_MTases_N"/>
</dbReference>
<dbReference type="InterPro" id="IPR016009">
    <property type="entry name" value="tRNA_MeTrfase_TRMD/TRM10"/>
</dbReference>
<dbReference type="NCBIfam" id="NF000648">
    <property type="entry name" value="PRK00026.1"/>
    <property type="match status" value="1"/>
</dbReference>
<dbReference type="NCBIfam" id="TIGR00088">
    <property type="entry name" value="trmD"/>
    <property type="match status" value="1"/>
</dbReference>
<dbReference type="PANTHER" id="PTHR46417">
    <property type="entry name" value="TRNA (GUANINE-N(1)-)-METHYLTRANSFERASE"/>
    <property type="match status" value="1"/>
</dbReference>
<dbReference type="PANTHER" id="PTHR46417:SF1">
    <property type="entry name" value="TRNA (GUANINE-N(1)-)-METHYLTRANSFERASE"/>
    <property type="match status" value="1"/>
</dbReference>
<dbReference type="Pfam" id="PF01746">
    <property type="entry name" value="tRNA_m1G_MT"/>
    <property type="match status" value="1"/>
</dbReference>
<dbReference type="PIRSF" id="PIRSF000386">
    <property type="entry name" value="tRNA_mtase"/>
    <property type="match status" value="1"/>
</dbReference>
<dbReference type="SUPFAM" id="SSF75217">
    <property type="entry name" value="alpha/beta knot"/>
    <property type="match status" value="1"/>
</dbReference>
<reference key="1">
    <citation type="journal article" date="2006" name="Proc. Natl. Acad. Sci. U.S.A.">
        <title>Burkholderia xenovorans LB400 harbors a multi-replicon, 9.73-Mbp genome shaped for versatility.</title>
        <authorList>
            <person name="Chain P.S.G."/>
            <person name="Denef V.J."/>
            <person name="Konstantinidis K.T."/>
            <person name="Vergez L.M."/>
            <person name="Agullo L."/>
            <person name="Reyes V.L."/>
            <person name="Hauser L."/>
            <person name="Cordova M."/>
            <person name="Gomez L."/>
            <person name="Gonzalez M."/>
            <person name="Land M."/>
            <person name="Lao V."/>
            <person name="Larimer F."/>
            <person name="LiPuma J.J."/>
            <person name="Mahenthiralingam E."/>
            <person name="Malfatti S.A."/>
            <person name="Marx C.J."/>
            <person name="Parnell J.J."/>
            <person name="Ramette A."/>
            <person name="Richardson P."/>
            <person name="Seeger M."/>
            <person name="Smith D."/>
            <person name="Spilker T."/>
            <person name="Sul W.J."/>
            <person name="Tsoi T.V."/>
            <person name="Ulrich L.E."/>
            <person name="Zhulin I.B."/>
            <person name="Tiedje J.M."/>
        </authorList>
    </citation>
    <scope>NUCLEOTIDE SEQUENCE [LARGE SCALE GENOMIC DNA]</scope>
    <source>
        <strain>LB400</strain>
    </source>
</reference>
<protein>
    <recommendedName>
        <fullName evidence="1">tRNA (guanine-N(1)-)-methyltransferase</fullName>
        <ecNumber evidence="1">2.1.1.228</ecNumber>
    </recommendedName>
    <alternativeName>
        <fullName evidence="1">M1G-methyltransferase</fullName>
    </alternativeName>
    <alternativeName>
        <fullName evidence="1">tRNA [GM37] methyltransferase</fullName>
    </alternativeName>
</protein>
<organism>
    <name type="scientific">Paraburkholderia xenovorans (strain LB400)</name>
    <dbReference type="NCBI Taxonomy" id="266265"/>
    <lineage>
        <taxon>Bacteria</taxon>
        <taxon>Pseudomonadati</taxon>
        <taxon>Pseudomonadota</taxon>
        <taxon>Betaproteobacteria</taxon>
        <taxon>Burkholderiales</taxon>
        <taxon>Burkholderiaceae</taxon>
        <taxon>Paraburkholderia</taxon>
    </lineage>
</organism>
<feature type="chain" id="PRO_0000257399" description="tRNA (guanine-N(1)-)-methyltransferase">
    <location>
        <begin position="1"/>
        <end position="255"/>
    </location>
</feature>
<feature type="binding site" evidence="1">
    <location>
        <position position="117"/>
    </location>
    <ligand>
        <name>S-adenosyl-L-methionine</name>
        <dbReference type="ChEBI" id="CHEBI:59789"/>
    </ligand>
</feature>
<feature type="binding site" evidence="1">
    <location>
        <begin position="137"/>
        <end position="142"/>
    </location>
    <ligand>
        <name>S-adenosyl-L-methionine</name>
        <dbReference type="ChEBI" id="CHEBI:59789"/>
    </ligand>
</feature>
<accession>Q13VF0</accession>
<name>TRMD_PARXL</name>
<gene>
    <name evidence="1" type="primary">trmD</name>
    <name type="ordered locus">Bxeno_A3401</name>
    <name type="ORF">Bxe_A1008</name>
</gene>